<dbReference type="EMBL" id="CP000001">
    <property type="protein sequence ID" value="AAU20225.1"/>
    <property type="molecule type" value="Genomic_DNA"/>
</dbReference>
<dbReference type="RefSeq" id="WP_000470747.1">
    <property type="nucleotide sequence ID" value="NZ_CP009968.1"/>
</dbReference>
<dbReference type="SMR" id="Q63HG4"/>
<dbReference type="KEGG" id="bcz:BCE33L0004"/>
<dbReference type="PATRIC" id="fig|288681.22.peg.152"/>
<dbReference type="Proteomes" id="UP000002612">
    <property type="component" value="Chromosome"/>
</dbReference>
<dbReference type="GO" id="GO:0005737">
    <property type="term" value="C:cytoplasm"/>
    <property type="evidence" value="ECO:0007669"/>
    <property type="project" value="UniProtKB-SubCell"/>
</dbReference>
<dbReference type="GO" id="GO:0005524">
    <property type="term" value="F:ATP binding"/>
    <property type="evidence" value="ECO:0007669"/>
    <property type="project" value="UniProtKB-UniRule"/>
</dbReference>
<dbReference type="GO" id="GO:0003697">
    <property type="term" value="F:single-stranded DNA binding"/>
    <property type="evidence" value="ECO:0007669"/>
    <property type="project" value="UniProtKB-UniRule"/>
</dbReference>
<dbReference type="GO" id="GO:0006260">
    <property type="term" value="P:DNA replication"/>
    <property type="evidence" value="ECO:0007669"/>
    <property type="project" value="UniProtKB-UniRule"/>
</dbReference>
<dbReference type="GO" id="GO:0000731">
    <property type="term" value="P:DNA synthesis involved in DNA repair"/>
    <property type="evidence" value="ECO:0007669"/>
    <property type="project" value="TreeGrafter"/>
</dbReference>
<dbReference type="GO" id="GO:0006302">
    <property type="term" value="P:double-strand break repair"/>
    <property type="evidence" value="ECO:0007669"/>
    <property type="project" value="TreeGrafter"/>
</dbReference>
<dbReference type="GO" id="GO:0009432">
    <property type="term" value="P:SOS response"/>
    <property type="evidence" value="ECO:0007669"/>
    <property type="project" value="UniProtKB-UniRule"/>
</dbReference>
<dbReference type="CDD" id="cd03242">
    <property type="entry name" value="ABC_RecF"/>
    <property type="match status" value="1"/>
</dbReference>
<dbReference type="FunFam" id="1.20.1050.90:FF:000002">
    <property type="entry name" value="DNA replication and repair protein RecF"/>
    <property type="match status" value="1"/>
</dbReference>
<dbReference type="FunFam" id="3.40.50.300:FF:000400">
    <property type="entry name" value="DNA replication and repair protein RecF"/>
    <property type="match status" value="1"/>
</dbReference>
<dbReference type="Gene3D" id="3.40.50.300">
    <property type="entry name" value="P-loop containing nucleotide triphosphate hydrolases"/>
    <property type="match status" value="1"/>
</dbReference>
<dbReference type="Gene3D" id="1.20.1050.90">
    <property type="entry name" value="RecF/RecN/SMC, N-terminal domain"/>
    <property type="match status" value="1"/>
</dbReference>
<dbReference type="HAMAP" id="MF_00365">
    <property type="entry name" value="RecF"/>
    <property type="match status" value="1"/>
</dbReference>
<dbReference type="InterPro" id="IPR001238">
    <property type="entry name" value="DNA-binding_RecF"/>
</dbReference>
<dbReference type="InterPro" id="IPR018078">
    <property type="entry name" value="DNA-binding_RecF_CS"/>
</dbReference>
<dbReference type="InterPro" id="IPR027417">
    <property type="entry name" value="P-loop_NTPase"/>
</dbReference>
<dbReference type="InterPro" id="IPR003395">
    <property type="entry name" value="RecF/RecN/SMC_N"/>
</dbReference>
<dbReference type="InterPro" id="IPR042174">
    <property type="entry name" value="RecF_2"/>
</dbReference>
<dbReference type="NCBIfam" id="TIGR00611">
    <property type="entry name" value="recf"/>
    <property type="match status" value="1"/>
</dbReference>
<dbReference type="PANTHER" id="PTHR32182">
    <property type="entry name" value="DNA REPLICATION AND REPAIR PROTEIN RECF"/>
    <property type="match status" value="1"/>
</dbReference>
<dbReference type="PANTHER" id="PTHR32182:SF0">
    <property type="entry name" value="DNA REPLICATION AND REPAIR PROTEIN RECF"/>
    <property type="match status" value="1"/>
</dbReference>
<dbReference type="Pfam" id="PF02463">
    <property type="entry name" value="SMC_N"/>
    <property type="match status" value="1"/>
</dbReference>
<dbReference type="SUPFAM" id="SSF52540">
    <property type="entry name" value="P-loop containing nucleoside triphosphate hydrolases"/>
    <property type="match status" value="1"/>
</dbReference>
<dbReference type="PROSITE" id="PS00617">
    <property type="entry name" value="RECF_1"/>
    <property type="match status" value="1"/>
</dbReference>
<dbReference type="PROSITE" id="PS00618">
    <property type="entry name" value="RECF_2"/>
    <property type="match status" value="1"/>
</dbReference>
<proteinExistence type="inferred from homology"/>
<reference key="1">
    <citation type="journal article" date="2006" name="J. Bacteriol.">
        <title>Pathogenomic sequence analysis of Bacillus cereus and Bacillus thuringiensis isolates closely related to Bacillus anthracis.</title>
        <authorList>
            <person name="Han C.S."/>
            <person name="Xie G."/>
            <person name="Challacombe J.F."/>
            <person name="Altherr M.R."/>
            <person name="Bhotika S.S."/>
            <person name="Bruce D."/>
            <person name="Campbell C.S."/>
            <person name="Campbell M.L."/>
            <person name="Chen J."/>
            <person name="Chertkov O."/>
            <person name="Cleland C."/>
            <person name="Dimitrijevic M."/>
            <person name="Doggett N.A."/>
            <person name="Fawcett J.J."/>
            <person name="Glavina T."/>
            <person name="Goodwin L.A."/>
            <person name="Hill K.K."/>
            <person name="Hitchcock P."/>
            <person name="Jackson P.J."/>
            <person name="Keim P."/>
            <person name="Kewalramani A.R."/>
            <person name="Longmire J."/>
            <person name="Lucas S."/>
            <person name="Malfatti S."/>
            <person name="McMurry K."/>
            <person name="Meincke L.J."/>
            <person name="Misra M."/>
            <person name="Moseman B.L."/>
            <person name="Mundt M."/>
            <person name="Munk A.C."/>
            <person name="Okinaka R.T."/>
            <person name="Parson-Quintana B."/>
            <person name="Reilly L.P."/>
            <person name="Richardson P."/>
            <person name="Robinson D.L."/>
            <person name="Rubin E."/>
            <person name="Saunders E."/>
            <person name="Tapia R."/>
            <person name="Tesmer J.G."/>
            <person name="Thayer N."/>
            <person name="Thompson L.S."/>
            <person name="Tice H."/>
            <person name="Ticknor L.O."/>
            <person name="Wills P.L."/>
            <person name="Brettin T.S."/>
            <person name="Gilna P."/>
        </authorList>
    </citation>
    <scope>NUCLEOTIDE SEQUENCE [LARGE SCALE GENOMIC DNA]</scope>
    <source>
        <strain>ZK / E33L</strain>
    </source>
</reference>
<keyword id="KW-0067">ATP-binding</keyword>
<keyword id="KW-0963">Cytoplasm</keyword>
<keyword id="KW-0227">DNA damage</keyword>
<keyword id="KW-0234">DNA repair</keyword>
<keyword id="KW-0235">DNA replication</keyword>
<keyword id="KW-0238">DNA-binding</keyword>
<keyword id="KW-0547">Nucleotide-binding</keyword>
<keyword id="KW-0742">SOS response</keyword>
<comment type="function">
    <text evidence="1">The RecF protein is involved in DNA metabolism; it is required for DNA replication and normal SOS inducibility. RecF binds preferentially to single-stranded, linear DNA. It also seems to bind ATP.</text>
</comment>
<comment type="subcellular location">
    <subcellularLocation>
        <location evidence="1">Cytoplasm</location>
    </subcellularLocation>
</comment>
<comment type="similarity">
    <text evidence="1">Belongs to the RecF family.</text>
</comment>
<gene>
    <name evidence="1" type="primary">recF</name>
    <name type="ordered locus">BCE33L0004</name>
</gene>
<protein>
    <recommendedName>
        <fullName evidence="1">DNA replication and repair protein RecF</fullName>
    </recommendedName>
</protein>
<name>RECF_BACCZ</name>
<evidence type="ECO:0000255" key="1">
    <source>
        <dbReference type="HAMAP-Rule" id="MF_00365"/>
    </source>
</evidence>
<sequence>MFISEIQLKNYRNYEKLELSFEDKVNVIIGENAQGKTNLMEAIYVLAMAKSHRTSNDRELIRWDEDFGQIKGKLQKRNSSLSLELNISKKGKKAKLNQLEQQKLSQYIGVMNVVMFAPEDLNLVKGSPQVRRRFLDMELGQIAPVYLYELSQYQKVLTQRNHLLKKMQGNSKNEETMLDVFTLQLIEHGAKILQKRFEFLHLLQEWAAPIHRGISRGLEELEIVYKPSVDVSESMDLSKIKEVYYESFQSVKQREIFRGTTLLGPHRDDLQFFVNSKNVQVFGSQGQQRTTALSLKLAEIELIYSEVKEYPILLLDDVLSELDDYRQSHLLNTIQGKVQTFVTTTSVDGIEHETLKEAKTIHVTNGTVDCEIDRE</sequence>
<accession>Q63HG4</accession>
<feature type="chain" id="PRO_0000236106" description="DNA replication and repair protein RecF">
    <location>
        <begin position="1"/>
        <end position="375"/>
    </location>
</feature>
<feature type="binding site" evidence="1">
    <location>
        <begin position="30"/>
        <end position="37"/>
    </location>
    <ligand>
        <name>ATP</name>
        <dbReference type="ChEBI" id="CHEBI:30616"/>
    </ligand>
</feature>
<organism>
    <name type="scientific">Bacillus cereus (strain ZK / E33L)</name>
    <dbReference type="NCBI Taxonomy" id="288681"/>
    <lineage>
        <taxon>Bacteria</taxon>
        <taxon>Bacillati</taxon>
        <taxon>Bacillota</taxon>
        <taxon>Bacilli</taxon>
        <taxon>Bacillales</taxon>
        <taxon>Bacillaceae</taxon>
        <taxon>Bacillus</taxon>
        <taxon>Bacillus cereus group</taxon>
    </lineage>
</organism>